<dbReference type="EC" id="7.3.2.3" evidence="1"/>
<dbReference type="EMBL" id="AL513382">
    <property type="protein sequence ID" value="CAD07672.1"/>
    <property type="molecule type" value="Genomic_DNA"/>
</dbReference>
<dbReference type="EMBL" id="AE014613">
    <property type="protein sequence ID" value="AAO68135.1"/>
    <property type="molecule type" value="Genomic_DNA"/>
</dbReference>
<dbReference type="RefSeq" id="NP_456976.1">
    <property type="nucleotide sequence ID" value="NC_003198.1"/>
</dbReference>
<dbReference type="RefSeq" id="WP_000021072.1">
    <property type="nucleotide sequence ID" value="NZ_WSUR01000025.1"/>
</dbReference>
<dbReference type="SMR" id="Q8Z4V6"/>
<dbReference type="STRING" id="220341.gene:17586576"/>
<dbReference type="KEGG" id="stt:t0417"/>
<dbReference type="KEGG" id="sty:STY2678"/>
<dbReference type="PATRIC" id="fig|220341.7.peg.2715"/>
<dbReference type="eggNOG" id="COG1118">
    <property type="taxonomic scope" value="Bacteria"/>
</dbReference>
<dbReference type="HOGENOM" id="CLU_000604_1_1_6"/>
<dbReference type="OMA" id="AAFKHMT"/>
<dbReference type="OrthoDB" id="9802264at2"/>
<dbReference type="Proteomes" id="UP000000541">
    <property type="component" value="Chromosome"/>
</dbReference>
<dbReference type="Proteomes" id="UP000002670">
    <property type="component" value="Chromosome"/>
</dbReference>
<dbReference type="GO" id="GO:0043190">
    <property type="term" value="C:ATP-binding cassette (ABC) transporter complex"/>
    <property type="evidence" value="ECO:0007669"/>
    <property type="project" value="InterPro"/>
</dbReference>
<dbReference type="GO" id="GO:0015419">
    <property type="term" value="F:ABC-type sulfate transporter activity"/>
    <property type="evidence" value="ECO:0007669"/>
    <property type="project" value="InterPro"/>
</dbReference>
<dbReference type="GO" id="GO:0102025">
    <property type="term" value="F:ABC-type thiosulfate transporter activity"/>
    <property type="evidence" value="ECO:0007669"/>
    <property type="project" value="RHEA"/>
</dbReference>
<dbReference type="GO" id="GO:0005524">
    <property type="term" value="F:ATP binding"/>
    <property type="evidence" value="ECO:0007669"/>
    <property type="project" value="UniProtKB-KW"/>
</dbReference>
<dbReference type="GO" id="GO:0016887">
    <property type="term" value="F:ATP hydrolysis activity"/>
    <property type="evidence" value="ECO:0007669"/>
    <property type="project" value="InterPro"/>
</dbReference>
<dbReference type="FunFam" id="3.40.50.300:FF:000227">
    <property type="entry name" value="Sulfate/thiosulfate import ATP-binding protein CysA"/>
    <property type="match status" value="1"/>
</dbReference>
<dbReference type="Gene3D" id="3.40.50.300">
    <property type="entry name" value="P-loop containing nucleotide triphosphate hydrolases"/>
    <property type="match status" value="1"/>
</dbReference>
<dbReference type="InterPro" id="IPR003593">
    <property type="entry name" value="AAA+_ATPase"/>
</dbReference>
<dbReference type="InterPro" id="IPR050093">
    <property type="entry name" value="ABC_SmlMolc_Importer"/>
</dbReference>
<dbReference type="InterPro" id="IPR003439">
    <property type="entry name" value="ABC_transporter-like_ATP-bd"/>
</dbReference>
<dbReference type="InterPro" id="IPR017871">
    <property type="entry name" value="ABC_transporter-like_CS"/>
</dbReference>
<dbReference type="InterPro" id="IPR008995">
    <property type="entry name" value="Mo/tungstate-bd_C_term_dom"/>
</dbReference>
<dbReference type="InterPro" id="IPR027417">
    <property type="entry name" value="P-loop_NTPase"/>
</dbReference>
<dbReference type="InterPro" id="IPR005666">
    <property type="entry name" value="Sulph_transpt1"/>
</dbReference>
<dbReference type="NCBIfam" id="TIGR00968">
    <property type="entry name" value="3a0106s01"/>
    <property type="match status" value="1"/>
</dbReference>
<dbReference type="NCBIfam" id="NF008105">
    <property type="entry name" value="PRK10851.1"/>
    <property type="match status" value="1"/>
</dbReference>
<dbReference type="PANTHER" id="PTHR42781">
    <property type="entry name" value="SPERMIDINE/PUTRESCINE IMPORT ATP-BINDING PROTEIN POTA"/>
    <property type="match status" value="1"/>
</dbReference>
<dbReference type="PANTHER" id="PTHR42781:SF4">
    <property type="entry name" value="SPERMIDINE_PUTRESCINE IMPORT ATP-BINDING PROTEIN POTA"/>
    <property type="match status" value="1"/>
</dbReference>
<dbReference type="Pfam" id="PF00005">
    <property type="entry name" value="ABC_tran"/>
    <property type="match status" value="1"/>
</dbReference>
<dbReference type="SMART" id="SM00382">
    <property type="entry name" value="AAA"/>
    <property type="match status" value="1"/>
</dbReference>
<dbReference type="SUPFAM" id="SSF50331">
    <property type="entry name" value="MOP-like"/>
    <property type="match status" value="1"/>
</dbReference>
<dbReference type="SUPFAM" id="SSF52540">
    <property type="entry name" value="P-loop containing nucleoside triphosphate hydrolases"/>
    <property type="match status" value="1"/>
</dbReference>
<dbReference type="PROSITE" id="PS00211">
    <property type="entry name" value="ABC_TRANSPORTER_1"/>
    <property type="match status" value="1"/>
</dbReference>
<dbReference type="PROSITE" id="PS50893">
    <property type="entry name" value="ABC_TRANSPORTER_2"/>
    <property type="match status" value="1"/>
</dbReference>
<dbReference type="PROSITE" id="PS51237">
    <property type="entry name" value="CYSA"/>
    <property type="match status" value="1"/>
</dbReference>
<gene>
    <name evidence="1" type="primary">cysA</name>
    <name type="ordered locus">STY2678</name>
    <name type="ordered locus">t0417</name>
</gene>
<accession>Q8Z4V6</accession>
<name>CYSA_SALTI</name>
<comment type="function">
    <text evidence="1">Part of the ABC transporter complex CysAWTP involved in sulfate/thiosulfate import. Responsible for energy coupling to the transport system.</text>
</comment>
<comment type="catalytic activity">
    <reaction evidence="1">
        <text>sulfate(out) + ATP + H2O = sulfate(in) + ADP + phosphate + H(+)</text>
        <dbReference type="Rhea" id="RHEA:10192"/>
        <dbReference type="ChEBI" id="CHEBI:15377"/>
        <dbReference type="ChEBI" id="CHEBI:15378"/>
        <dbReference type="ChEBI" id="CHEBI:16189"/>
        <dbReference type="ChEBI" id="CHEBI:30616"/>
        <dbReference type="ChEBI" id="CHEBI:43474"/>
        <dbReference type="ChEBI" id="CHEBI:456216"/>
        <dbReference type="EC" id="7.3.2.3"/>
    </reaction>
</comment>
<comment type="catalytic activity">
    <reaction evidence="1">
        <text>thiosulfate(out) + ATP + H2O = thiosulfate(in) + ADP + phosphate + H(+)</text>
        <dbReference type="Rhea" id="RHEA:29871"/>
        <dbReference type="ChEBI" id="CHEBI:15377"/>
        <dbReference type="ChEBI" id="CHEBI:15378"/>
        <dbReference type="ChEBI" id="CHEBI:30616"/>
        <dbReference type="ChEBI" id="CHEBI:33542"/>
        <dbReference type="ChEBI" id="CHEBI:43474"/>
        <dbReference type="ChEBI" id="CHEBI:456216"/>
        <dbReference type="EC" id="7.3.2.3"/>
    </reaction>
</comment>
<comment type="subunit">
    <text evidence="1">The complex is composed of two ATP-binding proteins (CysA), two transmembrane proteins (CysT and CysW) and a solute-binding protein (CysP).</text>
</comment>
<comment type="subcellular location">
    <subcellularLocation>
        <location evidence="1">Cell inner membrane</location>
        <topology evidence="1">Peripheral membrane protein</topology>
    </subcellularLocation>
</comment>
<comment type="similarity">
    <text evidence="1">Belongs to the ABC transporter superfamily. Sulfate/tungstate importer (TC 3.A.1.6) family.</text>
</comment>
<organism>
    <name type="scientific">Salmonella typhi</name>
    <dbReference type="NCBI Taxonomy" id="90370"/>
    <lineage>
        <taxon>Bacteria</taxon>
        <taxon>Pseudomonadati</taxon>
        <taxon>Pseudomonadota</taxon>
        <taxon>Gammaproteobacteria</taxon>
        <taxon>Enterobacterales</taxon>
        <taxon>Enterobacteriaceae</taxon>
        <taxon>Salmonella</taxon>
    </lineage>
</organism>
<proteinExistence type="inferred from homology"/>
<keyword id="KW-0067">ATP-binding</keyword>
<keyword id="KW-0997">Cell inner membrane</keyword>
<keyword id="KW-1003">Cell membrane</keyword>
<keyword id="KW-0472">Membrane</keyword>
<keyword id="KW-0547">Nucleotide-binding</keyword>
<keyword id="KW-0764">Sulfate transport</keyword>
<keyword id="KW-1278">Translocase</keyword>
<keyword id="KW-0813">Transport</keyword>
<reference key="1">
    <citation type="journal article" date="2001" name="Nature">
        <title>Complete genome sequence of a multiple drug resistant Salmonella enterica serovar Typhi CT18.</title>
        <authorList>
            <person name="Parkhill J."/>
            <person name="Dougan G."/>
            <person name="James K.D."/>
            <person name="Thomson N.R."/>
            <person name="Pickard D."/>
            <person name="Wain J."/>
            <person name="Churcher C.M."/>
            <person name="Mungall K.L."/>
            <person name="Bentley S.D."/>
            <person name="Holden M.T.G."/>
            <person name="Sebaihia M."/>
            <person name="Baker S."/>
            <person name="Basham D."/>
            <person name="Brooks K."/>
            <person name="Chillingworth T."/>
            <person name="Connerton P."/>
            <person name="Cronin A."/>
            <person name="Davis P."/>
            <person name="Davies R.M."/>
            <person name="Dowd L."/>
            <person name="White N."/>
            <person name="Farrar J."/>
            <person name="Feltwell T."/>
            <person name="Hamlin N."/>
            <person name="Haque A."/>
            <person name="Hien T.T."/>
            <person name="Holroyd S."/>
            <person name="Jagels K."/>
            <person name="Krogh A."/>
            <person name="Larsen T.S."/>
            <person name="Leather S."/>
            <person name="Moule S."/>
            <person name="O'Gaora P."/>
            <person name="Parry C."/>
            <person name="Quail M.A."/>
            <person name="Rutherford K.M."/>
            <person name="Simmonds M."/>
            <person name="Skelton J."/>
            <person name="Stevens K."/>
            <person name="Whitehead S."/>
            <person name="Barrell B.G."/>
        </authorList>
    </citation>
    <scope>NUCLEOTIDE SEQUENCE [LARGE SCALE GENOMIC DNA]</scope>
    <source>
        <strain>CT18</strain>
    </source>
</reference>
<reference key="2">
    <citation type="journal article" date="2003" name="J. Bacteriol.">
        <title>Comparative genomics of Salmonella enterica serovar Typhi strains Ty2 and CT18.</title>
        <authorList>
            <person name="Deng W."/>
            <person name="Liou S.-R."/>
            <person name="Plunkett G. III"/>
            <person name="Mayhew G.F."/>
            <person name="Rose D.J."/>
            <person name="Burland V."/>
            <person name="Kodoyianni V."/>
            <person name="Schwartz D.C."/>
            <person name="Blattner F.R."/>
        </authorList>
    </citation>
    <scope>NUCLEOTIDE SEQUENCE [LARGE SCALE GENOMIC DNA]</scope>
    <source>
        <strain>ATCC 700931 / Ty2</strain>
    </source>
</reference>
<evidence type="ECO:0000255" key="1">
    <source>
        <dbReference type="HAMAP-Rule" id="MF_01701"/>
    </source>
</evidence>
<protein>
    <recommendedName>
        <fullName evidence="1">Sulfate/thiosulfate import ATP-binding protein CysA</fullName>
        <ecNumber evidence="1">7.3.2.3</ecNumber>
    </recommendedName>
    <alternativeName>
        <fullName evidence="1">Sulfate-transporting ATPase</fullName>
    </alternativeName>
</protein>
<feature type="chain" id="PRO_0000092290" description="Sulfate/thiosulfate import ATP-binding protein CysA">
    <location>
        <begin position="1"/>
        <end position="364"/>
    </location>
</feature>
<feature type="domain" description="ABC transporter" evidence="1">
    <location>
        <begin position="3"/>
        <end position="237"/>
    </location>
</feature>
<feature type="binding site" evidence="1">
    <location>
        <begin position="35"/>
        <end position="42"/>
    </location>
    <ligand>
        <name>ATP</name>
        <dbReference type="ChEBI" id="CHEBI:30616"/>
    </ligand>
</feature>
<sequence length="364" mass="40850">MSIEIARIKKSFGRTQVLNDISLDIPSGQMVALLGPSGSGKTTLLRIIAGLEHQSSGHIRFHGTDVSRLHARERKVGFVFQHYALFRHMTVFDNIAFGLTVLPRRDRPTAAAIKTKVTQLLEMVQLAHLADRFPAQLSGGQKQRVALARALAVEPQILLLDEPFGALDAQVRKELRRWLRQLHEELKFTSVFVTHDQEEATEVADRVVVMSQGNIEQADAPDRVWREPATRFVLEFMGEVNRLTGTVRGGQFHVGAHRWPLGYTPAYQGPVDLFLRPWEVDISRRTSLDSPLPVQVIEASPKGHYTQLVVQPLGWYHDPLTVVMAGDDVPQRGERLFVGLQNARLYHGDQRIEPHEALALAESA</sequence>